<keyword id="KW-0021">Allosteric enzyme</keyword>
<keyword id="KW-0328">Glycosyltransferase</keyword>
<keyword id="KW-0342">GTP-binding</keyword>
<keyword id="KW-0460">Magnesium</keyword>
<keyword id="KW-0547">Nucleotide-binding</keyword>
<keyword id="KW-0808">Transferase</keyword>
<evidence type="ECO:0000255" key="1">
    <source>
        <dbReference type="HAMAP-Rule" id="MF_01218"/>
    </source>
</evidence>
<protein>
    <recommendedName>
        <fullName evidence="1">Uracil phosphoribosyltransferase</fullName>
        <ecNumber evidence="1">2.4.2.9</ecNumber>
    </recommendedName>
    <alternativeName>
        <fullName evidence="1">UMP pyrophosphorylase</fullName>
    </alternativeName>
    <alternativeName>
        <fullName evidence="1">UPRTase</fullName>
    </alternativeName>
</protein>
<organism>
    <name type="scientific">Escherichia coli O9:H4 (strain HS)</name>
    <dbReference type="NCBI Taxonomy" id="331112"/>
    <lineage>
        <taxon>Bacteria</taxon>
        <taxon>Pseudomonadati</taxon>
        <taxon>Pseudomonadota</taxon>
        <taxon>Gammaproteobacteria</taxon>
        <taxon>Enterobacterales</taxon>
        <taxon>Enterobacteriaceae</taxon>
        <taxon>Escherichia</taxon>
    </lineage>
</organism>
<accession>A8A2Z0</accession>
<gene>
    <name evidence="1" type="primary">upp</name>
    <name type="ordered locus">EcHS_A2633</name>
</gene>
<reference key="1">
    <citation type="journal article" date="2008" name="J. Bacteriol.">
        <title>The pangenome structure of Escherichia coli: comparative genomic analysis of E. coli commensal and pathogenic isolates.</title>
        <authorList>
            <person name="Rasko D.A."/>
            <person name="Rosovitz M.J."/>
            <person name="Myers G.S.A."/>
            <person name="Mongodin E.F."/>
            <person name="Fricke W.F."/>
            <person name="Gajer P."/>
            <person name="Crabtree J."/>
            <person name="Sebaihia M."/>
            <person name="Thomson N.R."/>
            <person name="Chaudhuri R."/>
            <person name="Henderson I.R."/>
            <person name="Sperandio V."/>
            <person name="Ravel J."/>
        </authorList>
    </citation>
    <scope>NUCLEOTIDE SEQUENCE [LARGE SCALE GENOMIC DNA]</scope>
    <source>
        <strain>HS</strain>
    </source>
</reference>
<feature type="chain" id="PRO_1000066729" description="Uracil phosphoribosyltransferase">
    <location>
        <begin position="1"/>
        <end position="208"/>
    </location>
</feature>
<feature type="binding site" evidence="1">
    <location>
        <position position="78"/>
    </location>
    <ligand>
        <name>5-phospho-alpha-D-ribose 1-diphosphate</name>
        <dbReference type="ChEBI" id="CHEBI:58017"/>
    </ligand>
</feature>
<feature type="binding site" evidence="1">
    <location>
        <position position="103"/>
    </location>
    <ligand>
        <name>5-phospho-alpha-D-ribose 1-diphosphate</name>
        <dbReference type="ChEBI" id="CHEBI:58017"/>
    </ligand>
</feature>
<feature type="binding site" evidence="1">
    <location>
        <begin position="130"/>
        <end position="138"/>
    </location>
    <ligand>
        <name>5-phospho-alpha-D-ribose 1-diphosphate</name>
        <dbReference type="ChEBI" id="CHEBI:58017"/>
    </ligand>
</feature>
<feature type="binding site" evidence="1">
    <location>
        <position position="193"/>
    </location>
    <ligand>
        <name>uracil</name>
        <dbReference type="ChEBI" id="CHEBI:17568"/>
    </ligand>
</feature>
<feature type="binding site" evidence="1">
    <location>
        <begin position="198"/>
        <end position="200"/>
    </location>
    <ligand>
        <name>uracil</name>
        <dbReference type="ChEBI" id="CHEBI:17568"/>
    </ligand>
</feature>
<feature type="binding site" evidence="1">
    <location>
        <position position="199"/>
    </location>
    <ligand>
        <name>5-phospho-alpha-D-ribose 1-diphosphate</name>
        <dbReference type="ChEBI" id="CHEBI:58017"/>
    </ligand>
</feature>
<name>UPP_ECOHS</name>
<sequence length="208" mass="22533">MKIVEVKHPLVKHKLGLMREQDISTKRFRELASEVGSLLTYEATADLETEKVTIEGWNGPVEIDQIKGKKITVVPILRAGLGMMDGVLENVPSARISVVGMYRNEETLEPVPYFQKLVSNIDERMALIVDPMLATGGSVIATIDLLKKAGCSSIKVLVLVAAPEGIAALEKAHPDVELYTASIDQGLNEHGYIIPGLGDAGDKIFGTK</sequence>
<proteinExistence type="inferred from homology"/>
<dbReference type="EC" id="2.4.2.9" evidence="1"/>
<dbReference type="EMBL" id="CP000802">
    <property type="protein sequence ID" value="ABV06894.1"/>
    <property type="molecule type" value="Genomic_DNA"/>
</dbReference>
<dbReference type="RefSeq" id="WP_001295473.1">
    <property type="nucleotide sequence ID" value="NC_009800.1"/>
</dbReference>
<dbReference type="SMR" id="A8A2Z0"/>
<dbReference type="GeneID" id="93774638"/>
<dbReference type="KEGG" id="ecx:EcHS_A2633"/>
<dbReference type="HOGENOM" id="CLU_067096_2_2_6"/>
<dbReference type="UniPathway" id="UPA00574">
    <property type="reaction ID" value="UER00636"/>
</dbReference>
<dbReference type="GO" id="GO:0005525">
    <property type="term" value="F:GTP binding"/>
    <property type="evidence" value="ECO:0007669"/>
    <property type="project" value="UniProtKB-KW"/>
</dbReference>
<dbReference type="GO" id="GO:0000287">
    <property type="term" value="F:magnesium ion binding"/>
    <property type="evidence" value="ECO:0007669"/>
    <property type="project" value="UniProtKB-UniRule"/>
</dbReference>
<dbReference type="GO" id="GO:0004845">
    <property type="term" value="F:uracil phosphoribosyltransferase activity"/>
    <property type="evidence" value="ECO:0007669"/>
    <property type="project" value="UniProtKB-UniRule"/>
</dbReference>
<dbReference type="GO" id="GO:0044206">
    <property type="term" value="P:UMP salvage"/>
    <property type="evidence" value="ECO:0007669"/>
    <property type="project" value="UniProtKB-UniRule"/>
</dbReference>
<dbReference type="GO" id="GO:0006223">
    <property type="term" value="P:uracil salvage"/>
    <property type="evidence" value="ECO:0007669"/>
    <property type="project" value="InterPro"/>
</dbReference>
<dbReference type="CDD" id="cd06223">
    <property type="entry name" value="PRTases_typeI"/>
    <property type="match status" value="1"/>
</dbReference>
<dbReference type="FunFam" id="3.40.50.2020:FF:000003">
    <property type="entry name" value="Uracil phosphoribosyltransferase"/>
    <property type="match status" value="1"/>
</dbReference>
<dbReference type="Gene3D" id="3.40.50.2020">
    <property type="match status" value="1"/>
</dbReference>
<dbReference type="HAMAP" id="MF_01218_B">
    <property type="entry name" value="Upp_B"/>
    <property type="match status" value="1"/>
</dbReference>
<dbReference type="InterPro" id="IPR000836">
    <property type="entry name" value="PRibTrfase_dom"/>
</dbReference>
<dbReference type="InterPro" id="IPR029057">
    <property type="entry name" value="PRTase-like"/>
</dbReference>
<dbReference type="InterPro" id="IPR034332">
    <property type="entry name" value="Upp_B"/>
</dbReference>
<dbReference type="InterPro" id="IPR050054">
    <property type="entry name" value="UPRTase/APRTase"/>
</dbReference>
<dbReference type="InterPro" id="IPR005765">
    <property type="entry name" value="Ura_phspho_trans"/>
</dbReference>
<dbReference type="NCBIfam" id="NF001097">
    <property type="entry name" value="PRK00129.1"/>
    <property type="match status" value="1"/>
</dbReference>
<dbReference type="NCBIfam" id="TIGR01091">
    <property type="entry name" value="upp"/>
    <property type="match status" value="1"/>
</dbReference>
<dbReference type="PANTHER" id="PTHR32315">
    <property type="entry name" value="ADENINE PHOSPHORIBOSYLTRANSFERASE"/>
    <property type="match status" value="1"/>
</dbReference>
<dbReference type="PANTHER" id="PTHR32315:SF4">
    <property type="entry name" value="URACIL PHOSPHORIBOSYLTRANSFERASE, CHLOROPLASTIC"/>
    <property type="match status" value="1"/>
</dbReference>
<dbReference type="Pfam" id="PF14681">
    <property type="entry name" value="UPRTase"/>
    <property type="match status" value="1"/>
</dbReference>
<dbReference type="SUPFAM" id="SSF53271">
    <property type="entry name" value="PRTase-like"/>
    <property type="match status" value="1"/>
</dbReference>
<comment type="function">
    <text evidence="1">Catalyzes the conversion of uracil and 5-phospho-alpha-D-ribose 1-diphosphate (PRPP) to UMP and diphosphate.</text>
</comment>
<comment type="catalytic activity">
    <reaction evidence="1">
        <text>UMP + diphosphate = 5-phospho-alpha-D-ribose 1-diphosphate + uracil</text>
        <dbReference type="Rhea" id="RHEA:13017"/>
        <dbReference type="ChEBI" id="CHEBI:17568"/>
        <dbReference type="ChEBI" id="CHEBI:33019"/>
        <dbReference type="ChEBI" id="CHEBI:57865"/>
        <dbReference type="ChEBI" id="CHEBI:58017"/>
        <dbReference type="EC" id="2.4.2.9"/>
    </reaction>
</comment>
<comment type="cofactor">
    <cofactor evidence="1">
        <name>Mg(2+)</name>
        <dbReference type="ChEBI" id="CHEBI:18420"/>
    </cofactor>
    <text evidence="1">Binds 1 Mg(2+) ion per subunit. The magnesium is bound as Mg-PRPP.</text>
</comment>
<comment type="activity regulation">
    <text evidence="1">Allosterically activated by GTP.</text>
</comment>
<comment type="pathway">
    <text evidence="1">Pyrimidine metabolism; UMP biosynthesis via salvage pathway; UMP from uracil: step 1/1.</text>
</comment>
<comment type="similarity">
    <text evidence="1">Belongs to the UPRTase family.</text>
</comment>